<accession>Q5NXM6</accession>
<evidence type="ECO:0000255" key="1">
    <source>
        <dbReference type="HAMAP-Rule" id="MF_00014"/>
    </source>
</evidence>
<reference key="1">
    <citation type="journal article" date="2005" name="Arch. Microbiol.">
        <title>The genome sequence of an anaerobic aromatic-degrading denitrifying bacterium, strain EbN1.</title>
        <authorList>
            <person name="Rabus R."/>
            <person name="Kube M."/>
            <person name="Heider J."/>
            <person name="Beck A."/>
            <person name="Heitmann K."/>
            <person name="Widdel F."/>
            <person name="Reinhardt R."/>
        </authorList>
    </citation>
    <scope>NUCLEOTIDE SEQUENCE [LARGE SCALE GENOMIC DNA]</scope>
    <source>
        <strain>DSM 19018 / LMG 30748 / EbN1</strain>
    </source>
</reference>
<feature type="chain" id="PRO_0000163244" description="Ribosome maturation factor RimM">
    <location>
        <begin position="1"/>
        <end position="168"/>
    </location>
</feature>
<feature type="domain" description="PRC barrel" evidence="1">
    <location>
        <begin position="96"/>
        <end position="168"/>
    </location>
</feature>
<keyword id="KW-0143">Chaperone</keyword>
<keyword id="KW-0963">Cytoplasm</keyword>
<keyword id="KW-1185">Reference proteome</keyword>
<keyword id="KW-0690">Ribosome biogenesis</keyword>
<keyword id="KW-0698">rRNA processing</keyword>
<name>RIMM_AROAE</name>
<proteinExistence type="inferred from homology"/>
<gene>
    <name evidence="1" type="primary">rimM</name>
    <name type="ordered locus">AZOSEA40630</name>
    <name type="ORF">ebA7167</name>
</gene>
<sequence>MIVLGRIVAPFGVKGWVKVHPFGDDPLSWGEMPQWWLADDADAPESAWQPVTLAGFKEHGAGLVAAFVGHDDRNAAEALQGRFIGAPREALPKPDVDEYYWGDLIGLAVVNQADEALGTVEALMSTGAHDVLQVRDGDDERLIPFVAAYVLDVDLAARTIRVDWQKDW</sequence>
<comment type="function">
    <text evidence="1">An accessory protein needed during the final step in the assembly of 30S ribosomal subunit, possibly for assembly of the head region. Essential for efficient processing of 16S rRNA. May be needed both before and after RbfA during the maturation of 16S rRNA. It has affinity for free ribosomal 30S subunits but not for 70S ribosomes.</text>
</comment>
<comment type="subunit">
    <text evidence="1">Binds ribosomal protein uS19.</text>
</comment>
<comment type="subcellular location">
    <subcellularLocation>
        <location evidence="1">Cytoplasm</location>
    </subcellularLocation>
</comment>
<comment type="domain">
    <text evidence="1">The PRC barrel domain binds ribosomal protein uS19.</text>
</comment>
<comment type="similarity">
    <text evidence="1">Belongs to the RimM family.</text>
</comment>
<protein>
    <recommendedName>
        <fullName evidence="1">Ribosome maturation factor RimM</fullName>
    </recommendedName>
</protein>
<organism>
    <name type="scientific">Aromatoleum aromaticum (strain DSM 19018 / LMG 30748 / EbN1)</name>
    <name type="common">Azoarcus sp. (strain EbN1)</name>
    <dbReference type="NCBI Taxonomy" id="76114"/>
    <lineage>
        <taxon>Bacteria</taxon>
        <taxon>Pseudomonadati</taxon>
        <taxon>Pseudomonadota</taxon>
        <taxon>Betaproteobacteria</taxon>
        <taxon>Rhodocyclales</taxon>
        <taxon>Rhodocyclaceae</taxon>
        <taxon>Aromatoleum</taxon>
    </lineage>
</organism>
<dbReference type="EMBL" id="CR555306">
    <property type="protein sequence ID" value="CAI10188.1"/>
    <property type="molecule type" value="Genomic_DNA"/>
</dbReference>
<dbReference type="RefSeq" id="WP_011239833.1">
    <property type="nucleotide sequence ID" value="NC_006513.1"/>
</dbReference>
<dbReference type="SMR" id="Q5NXM6"/>
<dbReference type="STRING" id="76114.ebA7167"/>
<dbReference type="KEGG" id="eba:ebA7167"/>
<dbReference type="eggNOG" id="COG0806">
    <property type="taxonomic scope" value="Bacteria"/>
</dbReference>
<dbReference type="HOGENOM" id="CLU_077636_1_0_4"/>
<dbReference type="OrthoDB" id="9783509at2"/>
<dbReference type="Proteomes" id="UP000006552">
    <property type="component" value="Chromosome"/>
</dbReference>
<dbReference type="GO" id="GO:0005737">
    <property type="term" value="C:cytoplasm"/>
    <property type="evidence" value="ECO:0007669"/>
    <property type="project" value="UniProtKB-SubCell"/>
</dbReference>
<dbReference type="GO" id="GO:0005840">
    <property type="term" value="C:ribosome"/>
    <property type="evidence" value="ECO:0007669"/>
    <property type="project" value="InterPro"/>
</dbReference>
<dbReference type="GO" id="GO:0043022">
    <property type="term" value="F:ribosome binding"/>
    <property type="evidence" value="ECO:0007669"/>
    <property type="project" value="InterPro"/>
</dbReference>
<dbReference type="GO" id="GO:0042274">
    <property type="term" value="P:ribosomal small subunit biogenesis"/>
    <property type="evidence" value="ECO:0007669"/>
    <property type="project" value="UniProtKB-UniRule"/>
</dbReference>
<dbReference type="GO" id="GO:0006364">
    <property type="term" value="P:rRNA processing"/>
    <property type="evidence" value="ECO:0007669"/>
    <property type="project" value="UniProtKB-UniRule"/>
</dbReference>
<dbReference type="Gene3D" id="2.30.30.240">
    <property type="entry name" value="PRC-barrel domain"/>
    <property type="match status" value="1"/>
</dbReference>
<dbReference type="Gene3D" id="2.40.30.60">
    <property type="entry name" value="RimM"/>
    <property type="match status" value="1"/>
</dbReference>
<dbReference type="HAMAP" id="MF_00014">
    <property type="entry name" value="Ribosome_mat_RimM"/>
    <property type="match status" value="1"/>
</dbReference>
<dbReference type="InterPro" id="IPR011033">
    <property type="entry name" value="PRC_barrel-like_sf"/>
</dbReference>
<dbReference type="InterPro" id="IPR056792">
    <property type="entry name" value="PRC_RimM"/>
</dbReference>
<dbReference type="InterPro" id="IPR011961">
    <property type="entry name" value="RimM"/>
</dbReference>
<dbReference type="InterPro" id="IPR002676">
    <property type="entry name" value="RimM_N"/>
</dbReference>
<dbReference type="InterPro" id="IPR036976">
    <property type="entry name" value="RimM_N_sf"/>
</dbReference>
<dbReference type="InterPro" id="IPR009000">
    <property type="entry name" value="Transl_B-barrel_sf"/>
</dbReference>
<dbReference type="NCBIfam" id="TIGR02273">
    <property type="entry name" value="16S_RimM"/>
    <property type="match status" value="1"/>
</dbReference>
<dbReference type="PANTHER" id="PTHR33692">
    <property type="entry name" value="RIBOSOME MATURATION FACTOR RIMM"/>
    <property type="match status" value="1"/>
</dbReference>
<dbReference type="PANTHER" id="PTHR33692:SF1">
    <property type="entry name" value="RIBOSOME MATURATION FACTOR RIMM"/>
    <property type="match status" value="1"/>
</dbReference>
<dbReference type="Pfam" id="PF24986">
    <property type="entry name" value="PRC_RimM"/>
    <property type="match status" value="1"/>
</dbReference>
<dbReference type="Pfam" id="PF01782">
    <property type="entry name" value="RimM"/>
    <property type="match status" value="1"/>
</dbReference>
<dbReference type="SUPFAM" id="SSF50346">
    <property type="entry name" value="PRC-barrel domain"/>
    <property type="match status" value="1"/>
</dbReference>
<dbReference type="SUPFAM" id="SSF50447">
    <property type="entry name" value="Translation proteins"/>
    <property type="match status" value="1"/>
</dbReference>